<protein>
    <recommendedName>
        <fullName evidence="1">Shikimate kinase</fullName>
        <shortName evidence="1">SK</shortName>
        <ecNumber evidence="1">2.7.1.71</ecNumber>
    </recommendedName>
</protein>
<feature type="chain" id="PRO_1000094375" description="Shikimate kinase">
    <location>
        <begin position="1"/>
        <end position="165"/>
    </location>
</feature>
<feature type="binding site" evidence="1">
    <location>
        <begin position="11"/>
        <end position="16"/>
    </location>
    <ligand>
        <name>ATP</name>
        <dbReference type="ChEBI" id="CHEBI:30616"/>
    </ligand>
</feature>
<feature type="binding site" evidence="1">
    <location>
        <position position="15"/>
    </location>
    <ligand>
        <name>Mg(2+)</name>
        <dbReference type="ChEBI" id="CHEBI:18420"/>
    </ligand>
</feature>
<feature type="binding site" evidence="1">
    <location>
        <position position="33"/>
    </location>
    <ligand>
        <name>substrate</name>
    </ligand>
</feature>
<feature type="binding site" evidence="1">
    <location>
        <position position="57"/>
    </location>
    <ligand>
        <name>substrate</name>
    </ligand>
</feature>
<feature type="binding site" evidence="1">
    <location>
        <position position="78"/>
    </location>
    <ligand>
        <name>substrate</name>
    </ligand>
</feature>
<feature type="binding site" evidence="1">
    <location>
        <position position="116"/>
    </location>
    <ligand>
        <name>ATP</name>
        <dbReference type="ChEBI" id="CHEBI:30616"/>
    </ligand>
</feature>
<feature type="binding site" evidence="1">
    <location>
        <position position="134"/>
    </location>
    <ligand>
        <name>substrate</name>
    </ligand>
</feature>
<reference key="1">
    <citation type="journal article" date="2008" name="Chem. Biol. Interact.">
        <title>Extending the Bacillus cereus group genomics to putative food-borne pathogens of different toxicity.</title>
        <authorList>
            <person name="Lapidus A."/>
            <person name="Goltsman E."/>
            <person name="Auger S."/>
            <person name="Galleron N."/>
            <person name="Segurens B."/>
            <person name="Dossat C."/>
            <person name="Land M.L."/>
            <person name="Broussolle V."/>
            <person name="Brillard J."/>
            <person name="Guinebretiere M.-H."/>
            <person name="Sanchis V."/>
            <person name="Nguen-the C."/>
            <person name="Lereclus D."/>
            <person name="Richardson P."/>
            <person name="Wincker P."/>
            <person name="Weissenbach J."/>
            <person name="Ehrlich S.D."/>
            <person name="Sorokin A."/>
        </authorList>
    </citation>
    <scope>NUCLEOTIDE SEQUENCE [LARGE SCALE GENOMIC DNA]</scope>
    <source>
        <strain>KBAB4</strain>
    </source>
</reference>
<organism>
    <name type="scientific">Bacillus mycoides (strain KBAB4)</name>
    <name type="common">Bacillus weihenstephanensis</name>
    <dbReference type="NCBI Taxonomy" id="315730"/>
    <lineage>
        <taxon>Bacteria</taxon>
        <taxon>Bacillati</taxon>
        <taxon>Bacillota</taxon>
        <taxon>Bacilli</taxon>
        <taxon>Bacillales</taxon>
        <taxon>Bacillaceae</taxon>
        <taxon>Bacillus</taxon>
        <taxon>Bacillus cereus group</taxon>
    </lineage>
</organism>
<sequence>MKSIYITGYMGAGKTTIGKVLSKELHMDVVDTDQKIEEKQEKAIRDIFAEEGEMAFREYESEMVRSLPVQNVIITTGGGIIERAENRKWMKENGTVVYLYCDPHVIAERLREDTTRPLFQKKDIDAFITKFESRRAYYEEADIHIDTTNKSVKQIMNELKQKINE</sequence>
<name>AROK_BACMK</name>
<evidence type="ECO:0000255" key="1">
    <source>
        <dbReference type="HAMAP-Rule" id="MF_00109"/>
    </source>
</evidence>
<accession>A9VH19</accession>
<proteinExistence type="inferred from homology"/>
<gene>
    <name evidence="1" type="primary">aroK</name>
    <name type="ordered locus">BcerKBAB4_4089</name>
</gene>
<comment type="function">
    <text evidence="1">Catalyzes the specific phosphorylation of the 3-hydroxyl group of shikimic acid using ATP as a cosubstrate.</text>
</comment>
<comment type="catalytic activity">
    <reaction evidence="1">
        <text>shikimate + ATP = 3-phosphoshikimate + ADP + H(+)</text>
        <dbReference type="Rhea" id="RHEA:13121"/>
        <dbReference type="ChEBI" id="CHEBI:15378"/>
        <dbReference type="ChEBI" id="CHEBI:30616"/>
        <dbReference type="ChEBI" id="CHEBI:36208"/>
        <dbReference type="ChEBI" id="CHEBI:145989"/>
        <dbReference type="ChEBI" id="CHEBI:456216"/>
        <dbReference type="EC" id="2.7.1.71"/>
    </reaction>
</comment>
<comment type="cofactor">
    <cofactor evidence="1">
        <name>Mg(2+)</name>
        <dbReference type="ChEBI" id="CHEBI:18420"/>
    </cofactor>
    <text evidence="1">Binds 1 Mg(2+) ion per subunit.</text>
</comment>
<comment type="pathway">
    <text evidence="1">Metabolic intermediate biosynthesis; chorismate biosynthesis; chorismate from D-erythrose 4-phosphate and phosphoenolpyruvate: step 5/7.</text>
</comment>
<comment type="subunit">
    <text evidence="1">Monomer.</text>
</comment>
<comment type="subcellular location">
    <subcellularLocation>
        <location evidence="1">Cytoplasm</location>
    </subcellularLocation>
</comment>
<comment type="similarity">
    <text evidence="1">Belongs to the shikimate kinase family.</text>
</comment>
<keyword id="KW-0028">Amino-acid biosynthesis</keyword>
<keyword id="KW-0057">Aromatic amino acid biosynthesis</keyword>
<keyword id="KW-0067">ATP-binding</keyword>
<keyword id="KW-0963">Cytoplasm</keyword>
<keyword id="KW-0418">Kinase</keyword>
<keyword id="KW-0460">Magnesium</keyword>
<keyword id="KW-0479">Metal-binding</keyword>
<keyword id="KW-0547">Nucleotide-binding</keyword>
<keyword id="KW-0808">Transferase</keyword>
<dbReference type="EC" id="2.7.1.71" evidence="1"/>
<dbReference type="EMBL" id="CP000903">
    <property type="protein sequence ID" value="ABY45251.1"/>
    <property type="molecule type" value="Genomic_DNA"/>
</dbReference>
<dbReference type="RefSeq" id="WP_012261707.1">
    <property type="nucleotide sequence ID" value="NC_010184.1"/>
</dbReference>
<dbReference type="SMR" id="A9VH19"/>
<dbReference type="KEGG" id="bwe:BcerKBAB4_4089"/>
<dbReference type="eggNOG" id="COG0703">
    <property type="taxonomic scope" value="Bacteria"/>
</dbReference>
<dbReference type="HOGENOM" id="CLU_057607_4_3_9"/>
<dbReference type="UniPathway" id="UPA00053">
    <property type="reaction ID" value="UER00088"/>
</dbReference>
<dbReference type="Proteomes" id="UP000002154">
    <property type="component" value="Chromosome"/>
</dbReference>
<dbReference type="GO" id="GO:0005829">
    <property type="term" value="C:cytosol"/>
    <property type="evidence" value="ECO:0007669"/>
    <property type="project" value="TreeGrafter"/>
</dbReference>
<dbReference type="GO" id="GO:0005524">
    <property type="term" value="F:ATP binding"/>
    <property type="evidence" value="ECO:0007669"/>
    <property type="project" value="UniProtKB-UniRule"/>
</dbReference>
<dbReference type="GO" id="GO:0000287">
    <property type="term" value="F:magnesium ion binding"/>
    <property type="evidence" value="ECO:0007669"/>
    <property type="project" value="UniProtKB-UniRule"/>
</dbReference>
<dbReference type="GO" id="GO:0004765">
    <property type="term" value="F:shikimate kinase activity"/>
    <property type="evidence" value="ECO:0007669"/>
    <property type="project" value="UniProtKB-UniRule"/>
</dbReference>
<dbReference type="GO" id="GO:0008652">
    <property type="term" value="P:amino acid biosynthetic process"/>
    <property type="evidence" value="ECO:0007669"/>
    <property type="project" value="UniProtKB-KW"/>
</dbReference>
<dbReference type="GO" id="GO:0009073">
    <property type="term" value="P:aromatic amino acid family biosynthetic process"/>
    <property type="evidence" value="ECO:0007669"/>
    <property type="project" value="UniProtKB-KW"/>
</dbReference>
<dbReference type="GO" id="GO:0009423">
    <property type="term" value="P:chorismate biosynthetic process"/>
    <property type="evidence" value="ECO:0007669"/>
    <property type="project" value="UniProtKB-UniRule"/>
</dbReference>
<dbReference type="CDD" id="cd00464">
    <property type="entry name" value="SK"/>
    <property type="match status" value="1"/>
</dbReference>
<dbReference type="Gene3D" id="3.40.50.300">
    <property type="entry name" value="P-loop containing nucleotide triphosphate hydrolases"/>
    <property type="match status" value="1"/>
</dbReference>
<dbReference type="HAMAP" id="MF_00109">
    <property type="entry name" value="Shikimate_kinase"/>
    <property type="match status" value="1"/>
</dbReference>
<dbReference type="InterPro" id="IPR027417">
    <property type="entry name" value="P-loop_NTPase"/>
</dbReference>
<dbReference type="InterPro" id="IPR031322">
    <property type="entry name" value="Shikimate/glucono_kinase"/>
</dbReference>
<dbReference type="InterPro" id="IPR000623">
    <property type="entry name" value="Shikimate_kinase/TSH1"/>
</dbReference>
<dbReference type="PANTHER" id="PTHR21087">
    <property type="entry name" value="SHIKIMATE KINASE"/>
    <property type="match status" value="1"/>
</dbReference>
<dbReference type="PANTHER" id="PTHR21087:SF16">
    <property type="entry name" value="SHIKIMATE KINASE 1, CHLOROPLASTIC"/>
    <property type="match status" value="1"/>
</dbReference>
<dbReference type="Pfam" id="PF01202">
    <property type="entry name" value="SKI"/>
    <property type="match status" value="1"/>
</dbReference>
<dbReference type="PRINTS" id="PR01100">
    <property type="entry name" value="SHIKIMTKNASE"/>
</dbReference>
<dbReference type="SUPFAM" id="SSF52540">
    <property type="entry name" value="P-loop containing nucleoside triphosphate hydrolases"/>
    <property type="match status" value="1"/>
</dbReference>